<dbReference type="EMBL" id="L42023">
    <property type="protein sequence ID" value="AAC23317.1"/>
    <property type="molecule type" value="Genomic_DNA"/>
</dbReference>
<dbReference type="PIR" id="A64040">
    <property type="entry name" value="A64040"/>
</dbReference>
<dbReference type="RefSeq" id="NP_439814.1">
    <property type="nucleotide sequence ID" value="NC_000907.1"/>
</dbReference>
<dbReference type="SMR" id="P44288"/>
<dbReference type="STRING" id="71421.HI_1672"/>
<dbReference type="EnsemblBacteria" id="AAC23317">
    <property type="protein sequence ID" value="AAC23317"/>
    <property type="gene ID" value="HI_1672"/>
</dbReference>
<dbReference type="KEGG" id="hin:HI_1672"/>
<dbReference type="PATRIC" id="fig|71421.8.peg.1751"/>
<dbReference type="eggNOG" id="COG3008">
    <property type="taxonomic scope" value="Bacteria"/>
</dbReference>
<dbReference type="HOGENOM" id="CLU_015836_0_0_6"/>
<dbReference type="OrthoDB" id="9806984at2"/>
<dbReference type="PhylomeDB" id="P44288"/>
<dbReference type="BioCyc" id="HINF71421:G1GJ1-1687-MONOMER"/>
<dbReference type="Proteomes" id="UP000000579">
    <property type="component" value="Chromosome"/>
</dbReference>
<dbReference type="GO" id="GO:0005886">
    <property type="term" value="C:plasma membrane"/>
    <property type="evidence" value="ECO:0000318"/>
    <property type="project" value="GO_Central"/>
</dbReference>
<dbReference type="GO" id="GO:0061024">
    <property type="term" value="P:membrane organization"/>
    <property type="evidence" value="ECO:0000318"/>
    <property type="project" value="GO_Central"/>
</dbReference>
<dbReference type="InterPro" id="IPR003399">
    <property type="entry name" value="Mce/MlaD"/>
</dbReference>
<dbReference type="InterPro" id="IPR051800">
    <property type="entry name" value="PqiA-PqiB_transport"/>
</dbReference>
<dbReference type="PANTHER" id="PTHR30462">
    <property type="entry name" value="INTERMEMBRANE TRANSPORT PROTEIN PQIB-RELATED"/>
    <property type="match status" value="1"/>
</dbReference>
<dbReference type="PANTHER" id="PTHR30462:SF0">
    <property type="entry name" value="INTERMEMBRANE TRANSPORT PROTEIN YEBT"/>
    <property type="match status" value="1"/>
</dbReference>
<dbReference type="Pfam" id="PF02470">
    <property type="entry name" value="MlaD"/>
    <property type="match status" value="5"/>
</dbReference>
<sequence>MTEKNNSSSIEEKYQERTANLRKTKRISPFWLLPFIALCIGAILFFQIVKERGTSITITFTNGSGIVADKTQIRYQGLQIGIVKEVHFTDNLQKVEVVANINPEASSILRENTKFWLVQPNVSLAGISGLDSLVSGNYITLQPGDGDREDEFIAEEQGPIAQVSAGDLLIHLISDDLGSISIGASVYFKKLPVGKIYDYRINKNNKVEIDVVIDKAYAKFVKKDSRFWNISGINANISPSGLNLNVESLNAVVQGAVSFDSPADSPKADENSHFTLYTNLKAAKRGIEIKVTIPASSALIAGQTEVYSQDNAIGILAKLSAVENNDEILEGSLLIDPNQASLFKANSKIVLRNKKIDLGNLAEPKKFFRGEYFDVIAGDGETKHQFNVIKENELLLNAPNTLVLTLTAPENYGVSEGQNVFYNNMIIGQIVSQTIDVNGVQFKAAIASEYRNLIHENTQFVAATNFDISVGLDGLRFESATPEKWLQGGVRVLTKQGLGKAKDSYPLYQNISNAEHGITGNILTPTITLHTQTLPSIDKGSLVLYRQFEVGKILSIKPKTNNFDVDIYIYPAYQHLLTDKSRFWVESAAKIDVSPKGISIQATPLARSLKGAISFDNGGSGNNRTLYANESYAKSIGFVITLITDDATNLSKGMNLRYLGLDVGQIDSIQLDAKAKRITAKALINPNYMNIIAKEGANFTIISPQISAGGIDNLDSLLQPYIDIEIGNGNTKTQFNLAQTAPQRNKFSNGTPFILETRDAMNLSEGSPILYRGVEVGTVKKFELNSLGDRVLVHIAIMPKYSHLVRQNTEFWIASGYDFSLGWKGAVFNTGSVQQLLKGGISFSTPAEKEIQPQAQPNKRFLLQINRPEEVQTWGSGALSK</sequence>
<name>Y1672_HAEIN</name>
<keyword id="KW-0997">Cell inner membrane</keyword>
<keyword id="KW-1003">Cell membrane</keyword>
<keyword id="KW-0472">Membrane</keyword>
<keyword id="KW-1185">Reference proteome</keyword>
<keyword id="KW-0812">Transmembrane</keyword>
<keyword id="KW-1133">Transmembrane helix</keyword>
<gene>
    <name type="ordered locus">HI_1672</name>
</gene>
<reference key="1">
    <citation type="journal article" date="1995" name="Science">
        <title>Whole-genome random sequencing and assembly of Haemophilus influenzae Rd.</title>
        <authorList>
            <person name="Fleischmann R.D."/>
            <person name="Adams M.D."/>
            <person name="White O."/>
            <person name="Clayton R.A."/>
            <person name="Kirkness E.F."/>
            <person name="Kerlavage A.R."/>
            <person name="Bult C.J."/>
            <person name="Tomb J.-F."/>
            <person name="Dougherty B.A."/>
            <person name="Merrick J.M."/>
            <person name="McKenney K."/>
            <person name="Sutton G.G."/>
            <person name="FitzHugh W."/>
            <person name="Fields C.A."/>
            <person name="Gocayne J.D."/>
            <person name="Scott J.D."/>
            <person name="Shirley R."/>
            <person name="Liu L.-I."/>
            <person name="Glodek A."/>
            <person name="Kelley J.M."/>
            <person name="Weidman J.F."/>
            <person name="Phillips C.A."/>
            <person name="Spriggs T."/>
            <person name="Hedblom E."/>
            <person name="Cotton M.D."/>
            <person name="Utterback T.R."/>
            <person name="Hanna M.C."/>
            <person name="Nguyen D.T."/>
            <person name="Saudek D.M."/>
            <person name="Brandon R.C."/>
            <person name="Fine L.D."/>
            <person name="Fritchman J.L."/>
            <person name="Fuhrmann J.L."/>
            <person name="Geoghagen N.S.M."/>
            <person name="Gnehm C.L."/>
            <person name="McDonald L.A."/>
            <person name="Small K.V."/>
            <person name="Fraser C.M."/>
            <person name="Smith H.O."/>
            <person name="Venter J.C."/>
        </authorList>
    </citation>
    <scope>NUCLEOTIDE SEQUENCE [LARGE SCALE GENOMIC DNA]</scope>
    <source>
        <strain>ATCC 51907 / DSM 11121 / KW20 / Rd</strain>
    </source>
</reference>
<reference key="2">
    <citation type="journal article" date="2000" name="Electrophoresis">
        <title>Two-dimensional map of the proteome of Haemophilus influenzae.</title>
        <authorList>
            <person name="Langen H."/>
            <person name="Takacs B."/>
            <person name="Evers S."/>
            <person name="Berndt P."/>
            <person name="Lahm H.W."/>
            <person name="Wipf B."/>
            <person name="Gray C."/>
            <person name="Fountoulakis M."/>
        </authorList>
    </citation>
    <scope>IDENTIFICATION BY MASS SPECTROMETRY</scope>
    <source>
        <strain>ATCC 51907 / DSM 11121 / KW20 / Rd</strain>
    </source>
</reference>
<accession>P44288</accession>
<feature type="chain" id="PRO_0000169056" description="Probable intermembrane transport protein HI_1672">
    <location>
        <begin position="1"/>
        <end position="881"/>
    </location>
</feature>
<feature type="transmembrane region" description="Helical" evidence="1">
    <location>
        <begin position="30"/>
        <end position="49"/>
    </location>
</feature>
<proteinExistence type="evidence at protein level"/>
<organism>
    <name type="scientific">Haemophilus influenzae (strain ATCC 51907 / DSM 11121 / KW20 / Rd)</name>
    <dbReference type="NCBI Taxonomy" id="71421"/>
    <lineage>
        <taxon>Bacteria</taxon>
        <taxon>Pseudomonadati</taxon>
        <taxon>Pseudomonadota</taxon>
        <taxon>Gammaproteobacteria</taxon>
        <taxon>Pasteurellales</taxon>
        <taxon>Pasteurellaceae</taxon>
        <taxon>Haemophilus</taxon>
    </lineage>
</organism>
<evidence type="ECO:0000255" key="1"/>
<evidence type="ECO:0000305" key="2"/>
<protein>
    <recommendedName>
        <fullName evidence="2">Probable intermembrane transport protein HI_1672</fullName>
    </recommendedName>
</protein>
<comment type="subcellular location">
    <subcellularLocation>
        <location evidence="2">Cell inner membrane</location>
        <topology evidence="2">Single-pass membrane protein</topology>
    </subcellularLocation>
</comment>
<comment type="similarity">
    <text evidence="2">Belongs to the PqiB family.</text>
</comment>